<dbReference type="EMBL" id="CP000789">
    <property type="protein sequence ID" value="ABU72198.1"/>
    <property type="molecule type" value="Genomic_DNA"/>
</dbReference>
<dbReference type="RefSeq" id="WP_010650001.1">
    <property type="nucleotide sequence ID" value="NC_022269.1"/>
</dbReference>
<dbReference type="SMR" id="A7N1X4"/>
<dbReference type="KEGG" id="vha:VIBHAR_03250"/>
<dbReference type="PATRIC" id="fig|338187.25.peg.2941"/>
<dbReference type="Proteomes" id="UP000008152">
    <property type="component" value="Chromosome I"/>
</dbReference>
<dbReference type="GO" id="GO:1990904">
    <property type="term" value="C:ribonucleoprotein complex"/>
    <property type="evidence" value="ECO:0007669"/>
    <property type="project" value="UniProtKB-KW"/>
</dbReference>
<dbReference type="GO" id="GO:0005840">
    <property type="term" value="C:ribosome"/>
    <property type="evidence" value="ECO:0007669"/>
    <property type="project" value="UniProtKB-KW"/>
</dbReference>
<dbReference type="GO" id="GO:0003735">
    <property type="term" value="F:structural constituent of ribosome"/>
    <property type="evidence" value="ECO:0007669"/>
    <property type="project" value="InterPro"/>
</dbReference>
<dbReference type="GO" id="GO:0006412">
    <property type="term" value="P:translation"/>
    <property type="evidence" value="ECO:0007669"/>
    <property type="project" value="UniProtKB-UniRule"/>
</dbReference>
<dbReference type="Gene3D" id="4.10.830.30">
    <property type="entry name" value="Ribosomal protein L31"/>
    <property type="match status" value="1"/>
</dbReference>
<dbReference type="HAMAP" id="MF_00502">
    <property type="entry name" value="Ribosomal_bL31_2"/>
    <property type="match status" value="1"/>
</dbReference>
<dbReference type="InterPro" id="IPR034704">
    <property type="entry name" value="Ribosomal_bL28/bL31-like_sf"/>
</dbReference>
<dbReference type="InterPro" id="IPR002150">
    <property type="entry name" value="Ribosomal_bL31"/>
</dbReference>
<dbReference type="InterPro" id="IPR027493">
    <property type="entry name" value="Ribosomal_bL31_B"/>
</dbReference>
<dbReference type="InterPro" id="IPR042105">
    <property type="entry name" value="Ribosomal_bL31_sf"/>
</dbReference>
<dbReference type="NCBIfam" id="TIGR00105">
    <property type="entry name" value="L31"/>
    <property type="match status" value="1"/>
</dbReference>
<dbReference type="NCBIfam" id="NF002462">
    <property type="entry name" value="PRK01678.1"/>
    <property type="match status" value="1"/>
</dbReference>
<dbReference type="PANTHER" id="PTHR33280">
    <property type="entry name" value="50S RIBOSOMAL PROTEIN L31, CHLOROPLASTIC"/>
    <property type="match status" value="1"/>
</dbReference>
<dbReference type="PANTHER" id="PTHR33280:SF1">
    <property type="entry name" value="LARGE RIBOSOMAL SUBUNIT PROTEIN BL31C"/>
    <property type="match status" value="1"/>
</dbReference>
<dbReference type="Pfam" id="PF01197">
    <property type="entry name" value="Ribosomal_L31"/>
    <property type="match status" value="1"/>
</dbReference>
<dbReference type="PRINTS" id="PR01249">
    <property type="entry name" value="RIBOSOMALL31"/>
</dbReference>
<dbReference type="SUPFAM" id="SSF143800">
    <property type="entry name" value="L28p-like"/>
    <property type="match status" value="1"/>
</dbReference>
<dbReference type="PROSITE" id="PS01143">
    <property type="entry name" value="RIBOSOMAL_L31"/>
    <property type="match status" value="1"/>
</dbReference>
<comment type="subunit">
    <text evidence="1">Part of the 50S ribosomal subunit.</text>
</comment>
<comment type="similarity">
    <text evidence="1">Belongs to the bacterial ribosomal protein bL31 family. Type B subfamily.</text>
</comment>
<organism>
    <name type="scientific">Vibrio campbellii (strain ATCC BAA-1116)</name>
    <dbReference type="NCBI Taxonomy" id="2902295"/>
    <lineage>
        <taxon>Bacteria</taxon>
        <taxon>Pseudomonadati</taxon>
        <taxon>Pseudomonadota</taxon>
        <taxon>Gammaproteobacteria</taxon>
        <taxon>Vibrionales</taxon>
        <taxon>Vibrionaceae</taxon>
        <taxon>Vibrio</taxon>
    </lineage>
</organism>
<accession>A7N1X4</accession>
<sequence length="86" mass="10050">MKPGIHPEYRPVVFHDTSVDEYFVVGSTLQTDRTIEWKDGKTYPYFTLDVSSESHPFYTGKQRVVQAEGRIANFNRRFGQFSKDKD</sequence>
<protein>
    <recommendedName>
        <fullName evidence="1">Large ribosomal subunit protein bL31B</fullName>
    </recommendedName>
    <alternativeName>
        <fullName evidence="2">50S ribosomal protein L31 type B</fullName>
    </alternativeName>
</protein>
<keyword id="KW-0687">Ribonucleoprotein</keyword>
<keyword id="KW-0689">Ribosomal protein</keyword>
<name>RL31B_VIBC1</name>
<evidence type="ECO:0000255" key="1">
    <source>
        <dbReference type="HAMAP-Rule" id="MF_00502"/>
    </source>
</evidence>
<evidence type="ECO:0000305" key="2"/>
<proteinExistence type="inferred from homology"/>
<feature type="chain" id="PRO_1000014722" description="Large ribosomal subunit protein bL31B">
    <location>
        <begin position="1"/>
        <end position="86"/>
    </location>
</feature>
<gene>
    <name evidence="1" type="primary">rpmE2</name>
    <name type="ordered locus">VIBHAR_03250</name>
</gene>
<reference key="1">
    <citation type="submission" date="2007-08" db="EMBL/GenBank/DDBJ databases">
        <authorList>
            <consortium name="The Vibrio harveyi Genome Sequencing Project"/>
            <person name="Bassler B."/>
            <person name="Clifton S.W."/>
            <person name="Fulton L."/>
            <person name="Delehaunty K."/>
            <person name="Fronick C."/>
            <person name="Harrison M."/>
            <person name="Markivic C."/>
            <person name="Fulton R."/>
            <person name="Tin-Wollam A.-M."/>
            <person name="Shah N."/>
            <person name="Pepin K."/>
            <person name="Nash W."/>
            <person name="Thiruvilangam P."/>
            <person name="Bhonagiri V."/>
            <person name="Waters C."/>
            <person name="Tu K.C."/>
            <person name="Irgon J."/>
            <person name="Wilson R.K."/>
        </authorList>
    </citation>
    <scope>NUCLEOTIDE SEQUENCE [LARGE SCALE GENOMIC DNA]</scope>
    <source>
        <strain>ATCC BAA-1116 / BB120</strain>
    </source>
</reference>